<protein>
    <recommendedName>
        <fullName>1-(5-phosphoribosyl)-5-[(5-phosphoribosylamino)methylideneamino] imidazole-4-carboxamide isomerase</fullName>
        <ecNumber>5.3.1.16</ecNumber>
    </recommendedName>
    <alternativeName>
        <fullName>Phosphoribosylformimino-5-aminoimidazole carboxamide ribotide isomerase</fullName>
    </alternativeName>
</protein>
<sequence length="247" mass="25844">MILFPAIDLKDGQCVRLKHGDMATATIYNDDPAAQAKAFEDQGFEWLHVVDLNGAFKGQSVNSAAVGAILKATKNPVQLGGGIRTLAQIEDWLDRGLARVILGTVAVRDPDLVRQACKAFPGKVAVGIDAKGGKVAVEGWAEASSLGVVELARKFEGAGVAAIIYTDIDRDGVLTGINWDATIDLAEAVSIPVIASGGLASIADIVRMTMPDAQKLEGAISGRALYDGRIDPAEALAILQGRPEAKS</sequence>
<name>HIS4_RHILO</name>
<reference key="1">
    <citation type="journal article" date="2000" name="DNA Res.">
        <title>Complete genome structure of the nitrogen-fixing symbiotic bacterium Mesorhizobium loti.</title>
        <authorList>
            <person name="Kaneko T."/>
            <person name="Nakamura Y."/>
            <person name="Sato S."/>
            <person name="Asamizu E."/>
            <person name="Kato T."/>
            <person name="Sasamoto S."/>
            <person name="Watanabe A."/>
            <person name="Idesawa K."/>
            <person name="Ishikawa A."/>
            <person name="Kawashima K."/>
            <person name="Kimura T."/>
            <person name="Kishida Y."/>
            <person name="Kiyokawa C."/>
            <person name="Kohara M."/>
            <person name="Matsumoto M."/>
            <person name="Matsuno A."/>
            <person name="Mochizuki Y."/>
            <person name="Nakayama S."/>
            <person name="Nakazaki N."/>
            <person name="Shimpo S."/>
            <person name="Sugimoto M."/>
            <person name="Takeuchi C."/>
            <person name="Yamada M."/>
            <person name="Tabata S."/>
        </authorList>
    </citation>
    <scope>NUCLEOTIDE SEQUENCE [LARGE SCALE GENOMIC DNA]</scope>
    <source>
        <strain>LMG 29417 / CECT 9101 / MAFF 303099</strain>
    </source>
</reference>
<feature type="chain" id="PRO_0000142042" description="1-(5-phosphoribosyl)-5-[(5-phosphoribosylamino)methylideneamino] imidazole-4-carboxamide isomerase">
    <location>
        <begin position="1"/>
        <end position="247"/>
    </location>
</feature>
<feature type="active site" description="Proton acceptor" evidence="1">
    <location>
        <position position="8"/>
    </location>
</feature>
<feature type="active site" description="Proton donor" evidence="1">
    <location>
        <position position="129"/>
    </location>
</feature>
<gene>
    <name type="primary">hisA</name>
    <name type="ordered locus">mlr5014</name>
</gene>
<keyword id="KW-0028">Amino-acid biosynthesis</keyword>
<keyword id="KW-0963">Cytoplasm</keyword>
<keyword id="KW-0368">Histidine biosynthesis</keyword>
<keyword id="KW-0413">Isomerase</keyword>
<evidence type="ECO:0000250" key="1"/>
<evidence type="ECO:0000305" key="2"/>
<comment type="catalytic activity">
    <reaction>
        <text>1-(5-phospho-beta-D-ribosyl)-5-[(5-phospho-beta-D-ribosylamino)methylideneamino]imidazole-4-carboxamide = 5-[(5-phospho-1-deoxy-D-ribulos-1-ylimino)methylamino]-1-(5-phospho-beta-D-ribosyl)imidazole-4-carboxamide</text>
        <dbReference type="Rhea" id="RHEA:15469"/>
        <dbReference type="ChEBI" id="CHEBI:58435"/>
        <dbReference type="ChEBI" id="CHEBI:58525"/>
        <dbReference type="EC" id="5.3.1.16"/>
    </reaction>
</comment>
<comment type="pathway">
    <text>Amino-acid biosynthesis; L-histidine biosynthesis; L-histidine from 5-phospho-alpha-D-ribose 1-diphosphate: step 4/9.</text>
</comment>
<comment type="subcellular location">
    <subcellularLocation>
        <location evidence="1">Cytoplasm</location>
    </subcellularLocation>
</comment>
<comment type="similarity">
    <text evidence="2">Belongs to the HisA/HisF family.</text>
</comment>
<accession>Q98CT3</accession>
<organism>
    <name type="scientific">Mesorhizobium japonicum (strain LMG 29417 / CECT 9101 / MAFF 303099)</name>
    <name type="common">Mesorhizobium loti (strain MAFF 303099)</name>
    <dbReference type="NCBI Taxonomy" id="266835"/>
    <lineage>
        <taxon>Bacteria</taxon>
        <taxon>Pseudomonadati</taxon>
        <taxon>Pseudomonadota</taxon>
        <taxon>Alphaproteobacteria</taxon>
        <taxon>Hyphomicrobiales</taxon>
        <taxon>Phyllobacteriaceae</taxon>
        <taxon>Mesorhizobium</taxon>
    </lineage>
</organism>
<dbReference type="EC" id="5.3.1.16"/>
<dbReference type="EMBL" id="BA000012">
    <property type="protein sequence ID" value="BAB51538.1"/>
    <property type="molecule type" value="Genomic_DNA"/>
</dbReference>
<dbReference type="RefSeq" id="WP_010912879.1">
    <property type="nucleotide sequence ID" value="NC_002678.2"/>
</dbReference>
<dbReference type="SMR" id="Q98CT3"/>
<dbReference type="GeneID" id="66680759"/>
<dbReference type="KEGG" id="mlo:mlr5014"/>
<dbReference type="eggNOG" id="COG0106">
    <property type="taxonomic scope" value="Bacteria"/>
</dbReference>
<dbReference type="HOGENOM" id="CLU_048577_1_1_5"/>
<dbReference type="UniPathway" id="UPA00031">
    <property type="reaction ID" value="UER00009"/>
</dbReference>
<dbReference type="Proteomes" id="UP000000552">
    <property type="component" value="Chromosome"/>
</dbReference>
<dbReference type="GO" id="GO:0005737">
    <property type="term" value="C:cytoplasm"/>
    <property type="evidence" value="ECO:0007669"/>
    <property type="project" value="UniProtKB-SubCell"/>
</dbReference>
<dbReference type="GO" id="GO:0003949">
    <property type="term" value="F:1-(5-phosphoribosyl)-5-[(5-phosphoribosylamino)methylideneamino]imidazole-4-carboxamide isomerase activity"/>
    <property type="evidence" value="ECO:0007669"/>
    <property type="project" value="UniProtKB-UniRule"/>
</dbReference>
<dbReference type="GO" id="GO:0000105">
    <property type="term" value="P:L-histidine biosynthetic process"/>
    <property type="evidence" value="ECO:0007669"/>
    <property type="project" value="UniProtKB-UniRule"/>
</dbReference>
<dbReference type="GO" id="GO:0000162">
    <property type="term" value="P:L-tryptophan biosynthetic process"/>
    <property type="evidence" value="ECO:0007669"/>
    <property type="project" value="TreeGrafter"/>
</dbReference>
<dbReference type="CDD" id="cd04732">
    <property type="entry name" value="HisA"/>
    <property type="match status" value="1"/>
</dbReference>
<dbReference type="FunFam" id="3.20.20.70:FF:000009">
    <property type="entry name" value="1-(5-phosphoribosyl)-5-[(5-phosphoribosylamino)methylideneamino] imidazole-4-carboxamide isomerase"/>
    <property type="match status" value="1"/>
</dbReference>
<dbReference type="Gene3D" id="3.20.20.70">
    <property type="entry name" value="Aldolase class I"/>
    <property type="match status" value="1"/>
</dbReference>
<dbReference type="HAMAP" id="MF_01014">
    <property type="entry name" value="HisA"/>
    <property type="match status" value="1"/>
</dbReference>
<dbReference type="InterPro" id="IPR013785">
    <property type="entry name" value="Aldolase_TIM"/>
</dbReference>
<dbReference type="InterPro" id="IPR006062">
    <property type="entry name" value="His_biosynth"/>
</dbReference>
<dbReference type="InterPro" id="IPR006063">
    <property type="entry name" value="HisA_bact_arch"/>
</dbReference>
<dbReference type="InterPro" id="IPR044524">
    <property type="entry name" value="Isoase_HisA-like"/>
</dbReference>
<dbReference type="InterPro" id="IPR023016">
    <property type="entry name" value="Isoase_HisA-like_bact"/>
</dbReference>
<dbReference type="InterPro" id="IPR011060">
    <property type="entry name" value="RibuloseP-bd_barrel"/>
</dbReference>
<dbReference type="NCBIfam" id="TIGR00007">
    <property type="entry name" value="1-(5-phosphoribosyl)-5-[(5-phosphoribosylamino)methylideneamino]imidazole-4-carboxamide isomerase"/>
    <property type="match status" value="1"/>
</dbReference>
<dbReference type="PANTHER" id="PTHR43090">
    <property type="entry name" value="1-(5-PHOSPHORIBOSYL)-5-[(5-PHOSPHORIBOSYLAMINO)METHYLIDENEAMINO] IMIDAZOLE-4-CARBOXAMIDE ISOMERASE"/>
    <property type="match status" value="1"/>
</dbReference>
<dbReference type="PANTHER" id="PTHR43090:SF2">
    <property type="entry name" value="1-(5-PHOSPHORIBOSYL)-5-[(5-PHOSPHORIBOSYLAMINO)METHYLIDENEAMINO] IMIDAZOLE-4-CARBOXAMIDE ISOMERASE"/>
    <property type="match status" value="1"/>
</dbReference>
<dbReference type="Pfam" id="PF00977">
    <property type="entry name" value="His_biosynth"/>
    <property type="match status" value="1"/>
</dbReference>
<dbReference type="SUPFAM" id="SSF51366">
    <property type="entry name" value="Ribulose-phoshate binding barrel"/>
    <property type="match status" value="1"/>
</dbReference>
<proteinExistence type="inferred from homology"/>